<dbReference type="EC" id="5.6.2.4" evidence="9 10"/>
<dbReference type="EMBL" id="AJ404471">
    <property type="protein sequence ID" value="CAC14866.1"/>
    <property type="molecule type" value="mRNA"/>
</dbReference>
<dbReference type="EMBL" id="AC007654">
    <property type="protein sequence ID" value="AAF24590.1"/>
    <property type="status" value="ALT_SEQ"/>
    <property type="molecule type" value="Genomic_DNA"/>
</dbReference>
<dbReference type="EMBL" id="CP002684">
    <property type="protein sequence ID" value="AEE31346.1"/>
    <property type="molecule type" value="Genomic_DNA"/>
</dbReference>
<dbReference type="EMBL" id="CP002684">
    <property type="protein sequence ID" value="AEE31347.1"/>
    <property type="molecule type" value="Genomic_DNA"/>
</dbReference>
<dbReference type="RefSeq" id="NP_001077639.1">
    <molecule id="Q9FT73-2"/>
    <property type="nucleotide sequence ID" value="NM_001084170.2"/>
</dbReference>
<dbReference type="RefSeq" id="NP_001319121.1">
    <molecule id="Q9FT73-1"/>
    <property type="nucleotide sequence ID" value="NM_001332956.1"/>
</dbReference>
<dbReference type="SMR" id="Q9FT73"/>
<dbReference type="BioGRID" id="25261">
    <property type="interactions" value="1"/>
</dbReference>
<dbReference type="FunCoup" id="Q9FT73">
    <property type="interactions" value="4082"/>
</dbReference>
<dbReference type="IntAct" id="Q9FT73">
    <property type="interactions" value="2"/>
</dbReference>
<dbReference type="STRING" id="3702.Q9FT73"/>
<dbReference type="iPTMnet" id="Q9FT73"/>
<dbReference type="PaxDb" id="3702-AT1G31360.1"/>
<dbReference type="EnsemblPlants" id="AT1G31360.1">
    <molecule id="Q9FT73-1"/>
    <property type="protein sequence ID" value="AT1G31360.1"/>
    <property type="gene ID" value="AT1G31360"/>
</dbReference>
<dbReference type="EnsemblPlants" id="AT1G31360.2">
    <molecule id="Q9FT73-2"/>
    <property type="protein sequence ID" value="AT1G31360.2"/>
    <property type="gene ID" value="AT1G31360"/>
</dbReference>
<dbReference type="GeneID" id="840026"/>
<dbReference type="Gramene" id="AT1G31360.1">
    <molecule id="Q9FT73-1"/>
    <property type="protein sequence ID" value="AT1G31360.1"/>
    <property type="gene ID" value="AT1G31360"/>
</dbReference>
<dbReference type="Gramene" id="AT1G31360.2">
    <molecule id="Q9FT73-2"/>
    <property type="protein sequence ID" value="AT1G31360.2"/>
    <property type="gene ID" value="AT1G31360"/>
</dbReference>
<dbReference type="KEGG" id="ath:AT1G31360"/>
<dbReference type="Araport" id="AT1G31360"/>
<dbReference type="TAIR" id="AT1G31360">
    <property type="gene designation" value="RECQL2"/>
</dbReference>
<dbReference type="eggNOG" id="KOG0353">
    <property type="taxonomic scope" value="Eukaryota"/>
</dbReference>
<dbReference type="InParanoid" id="Q9FT73"/>
<dbReference type="PhylomeDB" id="Q9FT73"/>
<dbReference type="PRO" id="PR:Q9FT73"/>
<dbReference type="Proteomes" id="UP000006548">
    <property type="component" value="Chromosome 1"/>
</dbReference>
<dbReference type="ExpressionAtlas" id="Q9FT73">
    <property type="expression patterns" value="baseline and differential"/>
</dbReference>
<dbReference type="GO" id="GO:0016592">
    <property type="term" value="C:mediator complex"/>
    <property type="evidence" value="ECO:0000314"/>
    <property type="project" value="UniProtKB"/>
</dbReference>
<dbReference type="GO" id="GO:0043138">
    <property type="term" value="F:3'-5' DNA helicase activity"/>
    <property type="evidence" value="ECO:0000314"/>
    <property type="project" value="TAIR"/>
</dbReference>
<dbReference type="GO" id="GO:0005524">
    <property type="term" value="F:ATP binding"/>
    <property type="evidence" value="ECO:0007669"/>
    <property type="project" value="UniProtKB-KW"/>
</dbReference>
<dbReference type="GO" id="GO:0016887">
    <property type="term" value="F:ATP hydrolysis activity"/>
    <property type="evidence" value="ECO:0007669"/>
    <property type="project" value="RHEA"/>
</dbReference>
<dbReference type="GO" id="GO:0003677">
    <property type="term" value="F:DNA binding"/>
    <property type="evidence" value="ECO:0007669"/>
    <property type="project" value="UniProtKB-KW"/>
</dbReference>
<dbReference type="GO" id="GO:0009378">
    <property type="term" value="F:four-way junction helicase activity"/>
    <property type="evidence" value="ECO:0000314"/>
    <property type="project" value="TAIR"/>
</dbReference>
<dbReference type="GO" id="GO:0046872">
    <property type="term" value="F:metal ion binding"/>
    <property type="evidence" value="ECO:0007669"/>
    <property type="project" value="UniProtKB-KW"/>
</dbReference>
<dbReference type="GO" id="GO:0006310">
    <property type="term" value="P:DNA recombination"/>
    <property type="evidence" value="ECO:0000305"/>
    <property type="project" value="TAIR"/>
</dbReference>
<dbReference type="GO" id="GO:0006281">
    <property type="term" value="P:DNA repair"/>
    <property type="evidence" value="ECO:0000305"/>
    <property type="project" value="TAIR"/>
</dbReference>
<dbReference type="GO" id="GO:0006260">
    <property type="term" value="P:DNA replication"/>
    <property type="evidence" value="ECO:0007669"/>
    <property type="project" value="InterPro"/>
</dbReference>
<dbReference type="CDD" id="cd18015">
    <property type="entry name" value="DEXHc_RecQ1"/>
    <property type="match status" value="1"/>
</dbReference>
<dbReference type="CDD" id="cd18794">
    <property type="entry name" value="SF2_C_RecQ"/>
    <property type="match status" value="1"/>
</dbReference>
<dbReference type="FunFam" id="1.10.10.10:FF:000510">
    <property type="entry name" value="ATP-dependent DNA helicase"/>
    <property type="match status" value="1"/>
</dbReference>
<dbReference type="FunFam" id="1.10.150.80:FF:000016">
    <property type="entry name" value="ATP-dependent DNA helicase"/>
    <property type="match status" value="1"/>
</dbReference>
<dbReference type="FunFam" id="3.40.50.300:FF:000752">
    <property type="entry name" value="ATP-dependent DNA helicase"/>
    <property type="match status" value="1"/>
</dbReference>
<dbReference type="FunFam" id="3.40.50.300:FF:001215">
    <property type="entry name" value="ATP-dependent DNA helicase"/>
    <property type="match status" value="1"/>
</dbReference>
<dbReference type="Gene3D" id="1.10.150.80">
    <property type="entry name" value="HRDC domain"/>
    <property type="match status" value="1"/>
</dbReference>
<dbReference type="Gene3D" id="3.40.50.300">
    <property type="entry name" value="P-loop containing nucleotide triphosphate hydrolases"/>
    <property type="match status" value="2"/>
</dbReference>
<dbReference type="Gene3D" id="1.10.10.10">
    <property type="entry name" value="Winged helix-like DNA-binding domain superfamily/Winged helix DNA-binding domain"/>
    <property type="match status" value="1"/>
</dbReference>
<dbReference type="InterPro" id="IPR011545">
    <property type="entry name" value="DEAD/DEAH_box_helicase_dom"/>
</dbReference>
<dbReference type="InterPro" id="IPR004589">
    <property type="entry name" value="DNA_helicase_ATP-dep_RecQ"/>
</dbReference>
<dbReference type="InterPro" id="IPR014001">
    <property type="entry name" value="Helicase_ATP-bd"/>
</dbReference>
<dbReference type="InterPro" id="IPR001650">
    <property type="entry name" value="Helicase_C-like"/>
</dbReference>
<dbReference type="InterPro" id="IPR010997">
    <property type="entry name" value="HRDC-like_sf"/>
</dbReference>
<dbReference type="InterPro" id="IPR002121">
    <property type="entry name" value="HRDC_dom"/>
</dbReference>
<dbReference type="InterPro" id="IPR044876">
    <property type="entry name" value="HRDC_dom_sf"/>
</dbReference>
<dbReference type="InterPro" id="IPR027417">
    <property type="entry name" value="P-loop_NTPase"/>
</dbReference>
<dbReference type="InterPro" id="IPR032284">
    <property type="entry name" value="RecQ_Zn-bd"/>
</dbReference>
<dbReference type="InterPro" id="IPR018982">
    <property type="entry name" value="RQC_domain"/>
</dbReference>
<dbReference type="InterPro" id="IPR036388">
    <property type="entry name" value="WH-like_DNA-bd_sf"/>
</dbReference>
<dbReference type="NCBIfam" id="TIGR00614">
    <property type="entry name" value="recQ_fam"/>
    <property type="match status" value="1"/>
</dbReference>
<dbReference type="PANTHER" id="PTHR13710:SF105">
    <property type="entry name" value="ATP-DEPENDENT DNA HELICASE Q1"/>
    <property type="match status" value="1"/>
</dbReference>
<dbReference type="PANTHER" id="PTHR13710">
    <property type="entry name" value="DNA HELICASE RECQ FAMILY MEMBER"/>
    <property type="match status" value="1"/>
</dbReference>
<dbReference type="Pfam" id="PF00270">
    <property type="entry name" value="DEAD"/>
    <property type="match status" value="1"/>
</dbReference>
<dbReference type="Pfam" id="PF00271">
    <property type="entry name" value="Helicase_C"/>
    <property type="match status" value="1"/>
</dbReference>
<dbReference type="Pfam" id="PF00570">
    <property type="entry name" value="HRDC"/>
    <property type="match status" value="1"/>
</dbReference>
<dbReference type="Pfam" id="PF16124">
    <property type="entry name" value="RecQ_Zn_bind"/>
    <property type="match status" value="1"/>
</dbReference>
<dbReference type="Pfam" id="PF09382">
    <property type="entry name" value="RQC"/>
    <property type="match status" value="1"/>
</dbReference>
<dbReference type="SMART" id="SM00487">
    <property type="entry name" value="DEXDc"/>
    <property type="match status" value="1"/>
</dbReference>
<dbReference type="SMART" id="SM00490">
    <property type="entry name" value="HELICc"/>
    <property type="match status" value="1"/>
</dbReference>
<dbReference type="SMART" id="SM00956">
    <property type="entry name" value="RQC"/>
    <property type="match status" value="1"/>
</dbReference>
<dbReference type="SUPFAM" id="SSF47819">
    <property type="entry name" value="HRDC-like"/>
    <property type="match status" value="1"/>
</dbReference>
<dbReference type="SUPFAM" id="SSF52540">
    <property type="entry name" value="P-loop containing nucleoside triphosphate hydrolases"/>
    <property type="match status" value="1"/>
</dbReference>
<dbReference type="PROSITE" id="PS51192">
    <property type="entry name" value="HELICASE_ATP_BIND_1"/>
    <property type="match status" value="1"/>
</dbReference>
<dbReference type="PROSITE" id="PS51194">
    <property type="entry name" value="HELICASE_CTER"/>
    <property type="match status" value="1"/>
</dbReference>
<dbReference type="PROSITE" id="PS50967">
    <property type="entry name" value="HRDC"/>
    <property type="match status" value="1"/>
</dbReference>
<name>RECQ2_ARATH</name>
<reference key="1">
    <citation type="journal article" date="2000" name="Nucleic Acids Res.">
        <title>Molecular characterisation of RecQ homologues in Arabidopsis thaliana.</title>
        <authorList>
            <person name="Hartung F."/>
            <person name="Plchova H."/>
            <person name="Puchta H."/>
        </authorList>
    </citation>
    <scope>NUCLEOTIDE SEQUENCE [MRNA] (ISOFORM 1)</scope>
    <scope>TISSUE SPECIFICITY</scope>
    <scope>INTERACTION WITH WEX</scope>
    <source>
        <strain>cv. Columbia</strain>
        <tissue>Flower</tissue>
    </source>
</reference>
<reference key="2">
    <citation type="journal article" date="2000" name="Nature">
        <title>Sequence and analysis of chromosome 1 of the plant Arabidopsis thaliana.</title>
        <authorList>
            <person name="Theologis A."/>
            <person name="Ecker J.R."/>
            <person name="Palm C.J."/>
            <person name="Federspiel N.A."/>
            <person name="Kaul S."/>
            <person name="White O."/>
            <person name="Alonso J."/>
            <person name="Altafi H."/>
            <person name="Araujo R."/>
            <person name="Bowman C.L."/>
            <person name="Brooks S.Y."/>
            <person name="Buehler E."/>
            <person name="Chan A."/>
            <person name="Chao Q."/>
            <person name="Chen H."/>
            <person name="Cheuk R.F."/>
            <person name="Chin C.W."/>
            <person name="Chung M.K."/>
            <person name="Conn L."/>
            <person name="Conway A.B."/>
            <person name="Conway A.R."/>
            <person name="Creasy T.H."/>
            <person name="Dewar K."/>
            <person name="Dunn P."/>
            <person name="Etgu P."/>
            <person name="Feldblyum T.V."/>
            <person name="Feng J.-D."/>
            <person name="Fong B."/>
            <person name="Fujii C.Y."/>
            <person name="Gill J.E."/>
            <person name="Goldsmith A.D."/>
            <person name="Haas B."/>
            <person name="Hansen N.F."/>
            <person name="Hughes B."/>
            <person name="Huizar L."/>
            <person name="Hunter J.L."/>
            <person name="Jenkins J."/>
            <person name="Johnson-Hopson C."/>
            <person name="Khan S."/>
            <person name="Khaykin E."/>
            <person name="Kim C.J."/>
            <person name="Koo H.L."/>
            <person name="Kremenetskaia I."/>
            <person name="Kurtz D.B."/>
            <person name="Kwan A."/>
            <person name="Lam B."/>
            <person name="Langin-Hooper S."/>
            <person name="Lee A."/>
            <person name="Lee J.M."/>
            <person name="Lenz C.A."/>
            <person name="Li J.H."/>
            <person name="Li Y.-P."/>
            <person name="Lin X."/>
            <person name="Liu S.X."/>
            <person name="Liu Z.A."/>
            <person name="Luros J.S."/>
            <person name="Maiti R."/>
            <person name="Marziali A."/>
            <person name="Militscher J."/>
            <person name="Miranda M."/>
            <person name="Nguyen M."/>
            <person name="Nierman W.C."/>
            <person name="Osborne B.I."/>
            <person name="Pai G."/>
            <person name="Peterson J."/>
            <person name="Pham P.K."/>
            <person name="Rizzo M."/>
            <person name="Rooney T."/>
            <person name="Rowley D."/>
            <person name="Sakano H."/>
            <person name="Salzberg S.L."/>
            <person name="Schwartz J.R."/>
            <person name="Shinn P."/>
            <person name="Southwick A.M."/>
            <person name="Sun H."/>
            <person name="Tallon L.J."/>
            <person name="Tambunga G."/>
            <person name="Toriumi M.J."/>
            <person name="Town C.D."/>
            <person name="Utterback T."/>
            <person name="Van Aken S."/>
            <person name="Vaysberg M."/>
            <person name="Vysotskaia V.S."/>
            <person name="Walker M."/>
            <person name="Wu D."/>
            <person name="Yu G."/>
            <person name="Fraser C.M."/>
            <person name="Venter J.C."/>
            <person name="Davis R.W."/>
        </authorList>
    </citation>
    <scope>NUCLEOTIDE SEQUENCE [LARGE SCALE GENOMIC DNA]</scope>
    <source>
        <strain>cv. Columbia</strain>
    </source>
</reference>
<reference key="3">
    <citation type="journal article" date="2017" name="Plant J.">
        <title>Araport11: a complete reannotation of the Arabidopsis thaliana reference genome.</title>
        <authorList>
            <person name="Cheng C.Y."/>
            <person name="Krishnakumar V."/>
            <person name="Chan A.P."/>
            <person name="Thibaud-Nissen F."/>
            <person name="Schobel S."/>
            <person name="Town C.D."/>
        </authorList>
    </citation>
    <scope>GENOME REANNOTATION</scope>
    <source>
        <strain>cv. Columbia</strain>
    </source>
</reference>
<reference key="4">
    <citation type="journal article" date="2003" name="Plant Mol. Biol.">
        <title>Arabidopsis RecQsim, a plant-specific member of the RecQ helicase family, can suppress the MMS hypersensitivity of the yeast sgs1 mutant.</title>
        <authorList>
            <person name="Bagherieh-Najjar M.B."/>
            <person name="de Vries O.M."/>
            <person name="Kroon J.T."/>
            <person name="Wright E.L."/>
            <person name="Elborough K.M."/>
            <person name="Hille J."/>
            <person name="Dijkwel P.P."/>
        </authorList>
    </citation>
    <scope>TISSUE SPECIFICITY</scope>
</reference>
<reference key="5">
    <citation type="journal article" date="2006" name="J. Plant Physiol.">
        <title>The RecQ gene family in plants.</title>
        <authorList>
            <person name="Hartung F."/>
            <person name="Puchta H."/>
        </authorList>
    </citation>
    <scope>GENE FAMILY</scope>
    <scope>NOMENCLATURE</scope>
</reference>
<reference key="6">
    <citation type="journal article" date="2007" name="Mol. Cell">
        <title>Purification of a plant mediator from Arabidopsis thaliana identifies PFT1 as the Med25 subunit.</title>
        <authorList>
            <person name="Baeckstroem S."/>
            <person name="Elfving N."/>
            <person name="Nilsson R."/>
            <person name="Wingsle G."/>
            <person name="Bjoerklund S."/>
        </authorList>
    </citation>
    <scope>IDENTIFICATION BY MASS SPECTROMETRY</scope>
    <scope>NOMENCLATURE</scope>
</reference>
<reference key="7">
    <citation type="journal article" date="2008" name="Plant J.">
        <title>AtRECQ2, a RecQ helicase homologue from Arabidopsis thaliana, is able to disrupt various recombinogenic DNA structures in vitro.</title>
        <authorList>
            <person name="Kobbe D."/>
            <person name="Blanck S."/>
            <person name="Demand K."/>
            <person name="Focke M."/>
            <person name="Puchta H."/>
        </authorList>
    </citation>
    <scope>FUNCTION</scope>
    <scope>CATALYTIC ACTIVITY</scope>
    <scope>MUTAGENESIS OF LYS-117</scope>
    <scope>COFACTOR</scope>
</reference>
<reference key="8">
    <citation type="journal article" date="2009" name="Plant Physiol.">
        <title>Biochemical characterization of AtRECQ3 reveals significant differences relative to other RecQ helicases.</title>
        <authorList>
            <person name="Kobbe D."/>
            <person name="Blanck S."/>
            <person name="Focke M."/>
            <person name="Puchta H."/>
        </authorList>
    </citation>
    <scope>FUNCTION</scope>
    <scope>CATALYTIC ACTIVITY</scope>
</reference>
<reference key="9">
    <citation type="journal article" date="2011" name="Plant Physiol.">
        <title>The Mediator complex in plants: structure, phylogeny, and expression profiling of representative genes in a dicot (Arabidopsis) and a monocot (rice) during reproduction and abiotic stress.</title>
        <authorList>
            <person name="Mathur S."/>
            <person name="Vyas S."/>
            <person name="Kapoor S."/>
            <person name="Tyagi A.K."/>
        </authorList>
    </citation>
    <scope>NOMENCLATURE</scope>
</reference>
<reference key="10">
    <citation type="journal article" date="2013" name="Nat. Commun.">
        <title>Fork sensing and strand switching control antagonistic activities of RecQ helicases.</title>
        <authorList>
            <person name="Klaue D."/>
            <person name="Kobbe D."/>
            <person name="Kemmerich F."/>
            <person name="Kozikowska A."/>
            <person name="Puchta H."/>
            <person name="Seidel R."/>
        </authorList>
    </citation>
    <scope>FUNCTION</scope>
</reference>
<reference key="11">
    <citation type="journal article" date="2013" name="PLoS ONE">
        <title>Genome-wide comparative in silico analysis of the RNA helicase gene family in Zea mays and Glycine max: a comparison with Arabidopsis and Oryza sativa.</title>
        <authorList>
            <person name="Xu R."/>
            <person name="Zhang S."/>
            <person name="Huang J."/>
            <person name="Zheng C."/>
        </authorList>
    </citation>
    <scope>GENE FAMILY</scope>
</reference>
<reference key="12">
    <citation type="journal article" date="2020" name="J. Biol. Chem.">
        <title>A comprehensive evaluation of a typical plant telomeric G-quadruplex (G4) DNA reveals the dynamics of G4 formation, rearrangement, and unfolding.</title>
        <authorList>
            <person name="Wu W.Q."/>
            <person name="Zhang M.L."/>
            <person name="Song C.P."/>
        </authorList>
    </citation>
    <scope>FUNCTION</scope>
</reference>
<evidence type="ECO:0000255" key="1"/>
<evidence type="ECO:0000255" key="2">
    <source>
        <dbReference type="PROSITE-ProRule" id="PRU00328"/>
    </source>
</evidence>
<evidence type="ECO:0000255" key="3">
    <source>
        <dbReference type="PROSITE-ProRule" id="PRU00541"/>
    </source>
</evidence>
<evidence type="ECO:0000255" key="4">
    <source>
        <dbReference type="PROSITE-ProRule" id="PRU00542"/>
    </source>
</evidence>
<evidence type="ECO:0000256" key="5">
    <source>
        <dbReference type="SAM" id="MobiDB-lite"/>
    </source>
</evidence>
<evidence type="ECO:0000269" key="6">
    <source>
    </source>
</evidence>
<evidence type="ECO:0000269" key="7">
    <source>
    </source>
</evidence>
<evidence type="ECO:0000269" key="8">
    <source>
    </source>
</evidence>
<evidence type="ECO:0000269" key="9">
    <source>
    </source>
</evidence>
<evidence type="ECO:0000269" key="10">
    <source>
    </source>
</evidence>
<evidence type="ECO:0000269" key="11">
    <source>
    </source>
</evidence>
<evidence type="ECO:0000269" key="12">
    <source>
    </source>
</evidence>
<evidence type="ECO:0000303" key="13">
    <source>
    </source>
</evidence>
<evidence type="ECO:0000303" key="14">
    <source>
    </source>
</evidence>
<evidence type="ECO:0000303" key="15">
    <source>
    </source>
</evidence>
<evidence type="ECO:0000303" key="16">
    <source>
    </source>
</evidence>
<evidence type="ECO:0000305" key="17"/>
<evidence type="ECO:0000305" key="18">
    <source>
    </source>
</evidence>
<evidence type="ECO:0000312" key="19">
    <source>
        <dbReference type="Araport" id="AT1G31360"/>
    </source>
</evidence>
<evidence type="ECO:0000312" key="20">
    <source>
        <dbReference type="EMBL" id="AAF24590.1"/>
    </source>
</evidence>
<accession>Q9FT73</accession>
<accession>A8MRK2</accession>
<accession>Q9SHE4</accession>
<gene>
    <name evidence="13" type="primary">RECQL2</name>
    <name evidence="15" type="synonym">MED34</name>
    <name evidence="16" type="synonym">MED34_1</name>
    <name evidence="14" type="synonym">RECQ2</name>
    <name type="synonym">RQL2</name>
    <name evidence="19" type="ordered locus">At1g31360</name>
    <name evidence="20" type="ORF">T19E23.16</name>
</gene>
<organism>
    <name type="scientific">Arabidopsis thaliana</name>
    <name type="common">Mouse-ear cress</name>
    <dbReference type="NCBI Taxonomy" id="3702"/>
    <lineage>
        <taxon>Eukaryota</taxon>
        <taxon>Viridiplantae</taxon>
        <taxon>Streptophyta</taxon>
        <taxon>Embryophyta</taxon>
        <taxon>Tracheophyta</taxon>
        <taxon>Spermatophyta</taxon>
        <taxon>Magnoliopsida</taxon>
        <taxon>eudicotyledons</taxon>
        <taxon>Gunneridae</taxon>
        <taxon>Pentapetalae</taxon>
        <taxon>rosids</taxon>
        <taxon>malvids</taxon>
        <taxon>Brassicales</taxon>
        <taxon>Brassicaceae</taxon>
        <taxon>Camelineae</taxon>
        <taxon>Arabidopsis</taxon>
    </lineage>
</organism>
<protein>
    <recommendedName>
        <fullName>ATP-dependent DNA helicase Q-like 2</fullName>
        <ecNumber evidence="9 10">5.6.2.4</ecNumber>
    </recommendedName>
    <alternativeName>
        <fullName evidence="17">DNA 3'-5' helicase RecQ2</fullName>
    </alternativeName>
    <alternativeName>
        <fullName evidence="13">RecQ-like protein 2</fullName>
        <shortName evidence="14">AtRQ2</shortName>
        <shortName evidence="14">AtRecQ2</shortName>
        <shortName evidence="13">AtRecQl2</shortName>
    </alternativeName>
</protein>
<feature type="chain" id="PRO_0000394133" description="ATP-dependent DNA helicase Q-like 2">
    <location>
        <begin position="1"/>
        <end position="705"/>
    </location>
</feature>
<feature type="domain" description="Helicase ATP-binding" evidence="3">
    <location>
        <begin position="98"/>
        <end position="273"/>
    </location>
</feature>
<feature type="domain" description="Helicase C-terminal" evidence="4">
    <location>
        <begin position="298"/>
        <end position="450"/>
    </location>
</feature>
<feature type="domain" description="HRDC" evidence="2">
    <location>
        <begin position="591"/>
        <end position="670"/>
    </location>
</feature>
<feature type="region of interest" description="Disordered" evidence="5">
    <location>
        <begin position="668"/>
        <end position="705"/>
    </location>
</feature>
<feature type="coiled-coil region" evidence="1">
    <location>
        <begin position="1"/>
        <end position="30"/>
    </location>
</feature>
<feature type="short sequence motif" description="DEAH box" evidence="3">
    <location>
        <begin position="217"/>
        <end position="220"/>
    </location>
</feature>
<feature type="binding site" evidence="3">
    <location>
        <begin position="111"/>
        <end position="118"/>
    </location>
    <ligand>
        <name>ATP</name>
        <dbReference type="ChEBI" id="CHEBI:30616"/>
    </ligand>
</feature>
<feature type="splice variant" id="VSP_039139" description="In isoform 2." evidence="17">
    <location>
        <begin position="1"/>
        <end position="125"/>
    </location>
</feature>
<feature type="mutagenesis site" description="Loss of ATPase or helicase activity." evidence="9">
    <original>K</original>
    <variation>M</variation>
    <location>
        <position position="117"/>
    </location>
</feature>
<sequence length="705" mass="79369">MESEAIQEDLQNLDVELKDVQGQISALIEHQDRLYERKSELKTLLKALAASGSPVASSGGSSAIENWSETFEWDSRADDVRFNVFGISKYRANQKEIINAIMTGRDVLVIMAAGGGKSLCYQLPAMLRGGTTLVVSPLLSLIQDQVMGLAALGISAYMLTSTSGKENEKFVYKALEKGEDDLKILYVTPEKVSKSKRFMSKLEKCHNAGRLSLISIDEAHCCSQWGHDFRPDYKNLSILKTQFPKVPMVALTATATQKVQNDLIEMLHIPKCVKFVSSVNRPNLFYSVREKSAVGKLVVDEIAEFIRESYSNNESGIVYCFSRKECEQIAGDLRERGISADYYHADMDANMREKVHMRWSKNKLQVIVGTVAFGMGINKPDVRFVIHHSLSKSMETYYQESGRAGRDGLPSECILFFRSADVPRQSSMVFYEYSGLQNLYDIVRYCQSKTKCRRSAFFRHFGEPSQDCNGMCDNCALSSEVKEVDVSDLSKLVVSMVQETQAKDQRVTMLQLGDKLRNKHKDLIAELKRDEVEHLVIKLIVDSVLKEEFQHTPYSTNAYVTMGPLANQLLQGRKTIKMETSSRQTKKLKRSITFSGLELKLDELRKEISAADGSILPHTVLSTQQIGSISSQKPVSLQELESIIGKLKTEKYGDRILEEVMRHEAVSEQLVEDPTKEETCKSRLRKRAKTQKDVVLVESSGEEEA</sequence>
<comment type="function">
    <text evidence="9 10 11 12">3'-5' DNA helicase that may play a role in the repair of DNA (PubMed:18419780, PubMed:19755539). Its DNA unwinding activity in vitro is dependent on magnesium, and ATP or dATP (PubMed:18419780, PubMed:19755539). Can use GTP/dGTP, CTP/dCTP or UTP/dUTP as nucleotide cofactors (PubMed:18419780, PubMed:19755539). Catalyzes Holliday junction branch migration and replication fork regression (PubMed:19755539, PubMed:23771268). Disrupts D-loop structures (PubMed:18419780). Unwinds G-quadruplex DNA, found in telomeric DNA (PubMed:32184352).</text>
</comment>
<comment type="catalytic activity">
    <reaction evidence="9 10">
        <text>Couples ATP hydrolysis with the unwinding of duplex DNA by translocating in the 3'-5' direction.</text>
        <dbReference type="EC" id="5.6.2.4"/>
    </reaction>
</comment>
<comment type="catalytic activity">
    <reaction evidence="18">
        <text>ATP + H2O = ADP + phosphate + H(+)</text>
        <dbReference type="Rhea" id="RHEA:13065"/>
        <dbReference type="ChEBI" id="CHEBI:15377"/>
        <dbReference type="ChEBI" id="CHEBI:15378"/>
        <dbReference type="ChEBI" id="CHEBI:30616"/>
        <dbReference type="ChEBI" id="CHEBI:43474"/>
        <dbReference type="ChEBI" id="CHEBI:456216"/>
    </reaction>
    <physiologicalReaction direction="left-to-right" evidence="18">
        <dbReference type="Rhea" id="RHEA:13066"/>
    </physiologicalReaction>
</comment>
<comment type="cofactor">
    <cofactor evidence="9">
        <name>Mg(2+)</name>
        <dbReference type="ChEBI" id="CHEBI:18420"/>
    </cofactor>
    <cofactor evidence="9">
        <name>Mn(2+)</name>
        <dbReference type="ChEBI" id="CHEBI:29035"/>
    </cofactor>
</comment>
<comment type="subunit">
    <text evidence="6">Interacts with WEX.</text>
</comment>
<comment type="subcellular location">
    <subcellularLocation>
        <location evidence="17">Nucleus</location>
    </subcellularLocation>
</comment>
<comment type="alternative products">
    <event type="alternative splicing"/>
    <isoform>
        <id>Q9FT73-1</id>
        <name>1</name>
        <sequence type="displayed"/>
    </isoform>
    <isoform>
        <id>Q9FT73-2</id>
        <name>2</name>
        <sequence type="described" ref="VSP_039139"/>
    </isoform>
</comment>
<comment type="tissue specificity">
    <text evidence="6 7">Expressed in shoots and flowers (PubMed:11058127, PubMed:12856935). Expressed in young leaves, inflorescences, roots, shoot apical meristem, young siliques, and mature green siliques (PubMed:12856935).</text>
</comment>
<comment type="miscellaneous">
    <text evidence="8 17">Baeckstroem et al identified RECQL2 in a Mediator complex pull-down assay and suggested that RECQL2 could be a plant specific component of the Mediator complex (PubMed:17560376). However, no experimental evidence has been brought so far to confirm this hypothesis (Probable).</text>
</comment>
<comment type="similarity">
    <text evidence="17">Belongs to the helicase family. RecQ subfamily.</text>
</comment>
<comment type="sequence caution" evidence="17">
    <conflict type="erroneous gene model prediction">
        <sequence resource="EMBL-CDS" id="AAF24590"/>
    </conflict>
</comment>
<keyword id="KW-0025">Alternative splicing</keyword>
<keyword id="KW-0067">ATP-binding</keyword>
<keyword id="KW-0175">Coiled coil</keyword>
<keyword id="KW-0238">DNA-binding</keyword>
<keyword id="KW-0347">Helicase</keyword>
<keyword id="KW-0378">Hydrolase</keyword>
<keyword id="KW-0413">Isomerase</keyword>
<keyword id="KW-0460">Magnesium</keyword>
<keyword id="KW-0464">Manganese</keyword>
<keyword id="KW-0479">Metal-binding</keyword>
<keyword id="KW-0547">Nucleotide-binding</keyword>
<keyword id="KW-0539">Nucleus</keyword>
<keyword id="KW-1185">Reference proteome</keyword>
<proteinExistence type="evidence at protein level"/>